<reference key="1">
    <citation type="submission" date="2008-10" db="EMBL/GenBank/DDBJ databases">
        <title>Genome sequence of Bacillus cereus G9842.</title>
        <authorList>
            <person name="Dodson R.J."/>
            <person name="Durkin A.S."/>
            <person name="Rosovitz M.J."/>
            <person name="Rasko D.A."/>
            <person name="Hoffmaster A."/>
            <person name="Ravel J."/>
            <person name="Sutton G."/>
        </authorList>
    </citation>
    <scope>NUCLEOTIDE SEQUENCE [LARGE SCALE GENOMIC DNA]</scope>
    <source>
        <strain>G9842</strain>
    </source>
</reference>
<protein>
    <recommendedName>
        <fullName evidence="1">tRNA dimethylallyltransferase</fullName>
        <ecNumber evidence="1">2.5.1.75</ecNumber>
    </recommendedName>
    <alternativeName>
        <fullName evidence="1">Dimethylallyl diphosphate:tRNA dimethylallyltransferase</fullName>
        <shortName evidence="1">DMAPP:tRNA dimethylallyltransferase</shortName>
        <shortName evidence="1">DMATase</shortName>
    </alternativeName>
    <alternativeName>
        <fullName evidence="1">Isopentenyl-diphosphate:tRNA isopentenyltransferase</fullName>
        <shortName evidence="1">IPP transferase</shortName>
        <shortName evidence="1">IPPT</shortName>
        <shortName evidence="1">IPTase</shortName>
    </alternativeName>
</protein>
<name>MIAA_BACC2</name>
<sequence>MGEVQREKVAVIIGPTAVGKTKLSIDLAKALNGEIISGDSMQIYRTMDIGTAKVTQAEMDGIPHYMVDIKNPEDSFSVAEFQERVRKHIREITERGKLPIIVGGTGLYIQSVLFDYQFTDDAGDVIYREQMEKLALERGVEYVHKKLQEVDPESAERIHANNVRRVIRALEIFHTTGEKMSDQIEKQEKELLYDVSLIGLTMDREMLYDRINLRVDLMMEQGLLEEVEGLYNRGIRDCQSIQAIGYKEIYDYFENRASLEDAVSQLKTNSRRYAKRQLTWFRNKMDVTWFDVTDGEKTSEILRYIEGKLQVKSNNSK</sequence>
<accession>B7ISQ9</accession>
<dbReference type="EC" id="2.5.1.75" evidence="1"/>
<dbReference type="EMBL" id="CP001186">
    <property type="protein sequence ID" value="ACK97269.1"/>
    <property type="molecule type" value="Genomic_DNA"/>
</dbReference>
<dbReference type="RefSeq" id="WP_000504954.1">
    <property type="nucleotide sequence ID" value="NC_011772.1"/>
</dbReference>
<dbReference type="SMR" id="B7ISQ9"/>
<dbReference type="KEGG" id="bcg:BCG9842_B1489"/>
<dbReference type="HOGENOM" id="CLU_032616_0_1_9"/>
<dbReference type="Proteomes" id="UP000006744">
    <property type="component" value="Chromosome"/>
</dbReference>
<dbReference type="GO" id="GO:0005524">
    <property type="term" value="F:ATP binding"/>
    <property type="evidence" value="ECO:0007669"/>
    <property type="project" value="UniProtKB-UniRule"/>
</dbReference>
<dbReference type="GO" id="GO:0052381">
    <property type="term" value="F:tRNA dimethylallyltransferase activity"/>
    <property type="evidence" value="ECO:0007669"/>
    <property type="project" value="UniProtKB-UniRule"/>
</dbReference>
<dbReference type="GO" id="GO:0006400">
    <property type="term" value="P:tRNA modification"/>
    <property type="evidence" value="ECO:0007669"/>
    <property type="project" value="TreeGrafter"/>
</dbReference>
<dbReference type="FunFam" id="1.10.20.140:FF:000001">
    <property type="entry name" value="tRNA dimethylallyltransferase"/>
    <property type="match status" value="1"/>
</dbReference>
<dbReference type="Gene3D" id="1.10.20.140">
    <property type="match status" value="1"/>
</dbReference>
<dbReference type="Gene3D" id="3.40.50.300">
    <property type="entry name" value="P-loop containing nucleotide triphosphate hydrolases"/>
    <property type="match status" value="1"/>
</dbReference>
<dbReference type="HAMAP" id="MF_00185">
    <property type="entry name" value="IPP_trans"/>
    <property type="match status" value="1"/>
</dbReference>
<dbReference type="InterPro" id="IPR039657">
    <property type="entry name" value="Dimethylallyltransferase"/>
</dbReference>
<dbReference type="InterPro" id="IPR018022">
    <property type="entry name" value="IPT"/>
</dbReference>
<dbReference type="InterPro" id="IPR027417">
    <property type="entry name" value="P-loop_NTPase"/>
</dbReference>
<dbReference type="NCBIfam" id="TIGR00174">
    <property type="entry name" value="miaA"/>
    <property type="match status" value="1"/>
</dbReference>
<dbReference type="PANTHER" id="PTHR11088">
    <property type="entry name" value="TRNA DIMETHYLALLYLTRANSFERASE"/>
    <property type="match status" value="1"/>
</dbReference>
<dbReference type="PANTHER" id="PTHR11088:SF60">
    <property type="entry name" value="TRNA DIMETHYLALLYLTRANSFERASE"/>
    <property type="match status" value="1"/>
</dbReference>
<dbReference type="Pfam" id="PF01715">
    <property type="entry name" value="IPPT"/>
    <property type="match status" value="1"/>
</dbReference>
<dbReference type="SUPFAM" id="SSF52540">
    <property type="entry name" value="P-loop containing nucleoside triphosphate hydrolases"/>
    <property type="match status" value="2"/>
</dbReference>
<feature type="chain" id="PRO_1000118517" description="tRNA dimethylallyltransferase">
    <location>
        <begin position="1"/>
        <end position="317"/>
    </location>
</feature>
<feature type="region of interest" description="Interaction with substrate tRNA" evidence="1">
    <location>
        <begin position="39"/>
        <end position="42"/>
    </location>
</feature>
<feature type="binding site" evidence="1">
    <location>
        <begin position="14"/>
        <end position="21"/>
    </location>
    <ligand>
        <name>ATP</name>
        <dbReference type="ChEBI" id="CHEBI:30616"/>
    </ligand>
</feature>
<feature type="binding site" evidence="1">
    <location>
        <begin position="16"/>
        <end position="21"/>
    </location>
    <ligand>
        <name>substrate</name>
    </ligand>
</feature>
<feature type="site" description="Interaction with substrate tRNA" evidence="1">
    <location>
        <position position="105"/>
    </location>
</feature>
<feature type="site" description="Interaction with substrate tRNA" evidence="1">
    <location>
        <position position="128"/>
    </location>
</feature>
<keyword id="KW-0067">ATP-binding</keyword>
<keyword id="KW-0460">Magnesium</keyword>
<keyword id="KW-0547">Nucleotide-binding</keyword>
<keyword id="KW-0808">Transferase</keyword>
<keyword id="KW-0819">tRNA processing</keyword>
<comment type="function">
    <text evidence="1">Catalyzes the transfer of a dimethylallyl group onto the adenine at position 37 in tRNAs that read codons beginning with uridine, leading to the formation of N6-(dimethylallyl)adenosine (i(6)A).</text>
</comment>
<comment type="catalytic activity">
    <reaction evidence="1">
        <text>adenosine(37) in tRNA + dimethylallyl diphosphate = N(6)-dimethylallyladenosine(37) in tRNA + diphosphate</text>
        <dbReference type="Rhea" id="RHEA:26482"/>
        <dbReference type="Rhea" id="RHEA-COMP:10162"/>
        <dbReference type="Rhea" id="RHEA-COMP:10375"/>
        <dbReference type="ChEBI" id="CHEBI:33019"/>
        <dbReference type="ChEBI" id="CHEBI:57623"/>
        <dbReference type="ChEBI" id="CHEBI:74411"/>
        <dbReference type="ChEBI" id="CHEBI:74415"/>
        <dbReference type="EC" id="2.5.1.75"/>
    </reaction>
</comment>
<comment type="cofactor">
    <cofactor evidence="1">
        <name>Mg(2+)</name>
        <dbReference type="ChEBI" id="CHEBI:18420"/>
    </cofactor>
</comment>
<comment type="subunit">
    <text evidence="1">Monomer.</text>
</comment>
<comment type="similarity">
    <text evidence="1">Belongs to the IPP transferase family.</text>
</comment>
<organism>
    <name type="scientific">Bacillus cereus (strain G9842)</name>
    <dbReference type="NCBI Taxonomy" id="405531"/>
    <lineage>
        <taxon>Bacteria</taxon>
        <taxon>Bacillati</taxon>
        <taxon>Bacillota</taxon>
        <taxon>Bacilli</taxon>
        <taxon>Bacillales</taxon>
        <taxon>Bacillaceae</taxon>
        <taxon>Bacillus</taxon>
        <taxon>Bacillus cereus group</taxon>
    </lineage>
</organism>
<proteinExistence type="inferred from homology"/>
<evidence type="ECO:0000255" key="1">
    <source>
        <dbReference type="HAMAP-Rule" id="MF_00185"/>
    </source>
</evidence>
<gene>
    <name evidence="1" type="primary">miaA</name>
    <name type="ordered locus">BCG9842_B1489</name>
</gene>